<evidence type="ECO:0000255" key="1"/>
<evidence type="ECO:0000269" key="2">
    <source>
    </source>
</evidence>
<evidence type="ECO:0000305" key="3"/>
<keyword id="KW-0186">Copper</keyword>
<keyword id="KW-0187">Copper transport</keyword>
<keyword id="KW-0406">Ion transport</keyword>
<keyword id="KW-0472">Membrane</keyword>
<keyword id="KW-1185">Reference proteome</keyword>
<keyword id="KW-0812">Transmembrane</keyword>
<keyword id="KW-1133">Transmembrane helix</keyword>
<keyword id="KW-0813">Transport</keyword>
<keyword id="KW-0926">Vacuole</keyword>
<sequence>MNHGGNSTMRHCSMKMTFNTDYDNLCIVFKSWHIGNLSQFLLSLLAIAILGYLFERLRSFTSLKETEFQRGYAGQQSEGLLTHHSKSLKSGRPFRLCALYAVQLVFSYFLMLVAMTYNAYVILAIAIGAAFGYRRSHCDTVQTVGLCH</sequence>
<gene>
    <name type="primary">ctr6</name>
    <name type="ORF">SPBC23G7.16</name>
</gene>
<reference key="1">
    <citation type="journal article" date="2002" name="Nature">
        <title>The genome sequence of Schizosaccharomyces pombe.</title>
        <authorList>
            <person name="Wood V."/>
            <person name="Gwilliam R."/>
            <person name="Rajandream M.A."/>
            <person name="Lyne M.H."/>
            <person name="Lyne R."/>
            <person name="Stewart A."/>
            <person name="Sgouros J.G."/>
            <person name="Peat N."/>
            <person name="Hayles J."/>
            <person name="Baker S.G."/>
            <person name="Basham D."/>
            <person name="Bowman S."/>
            <person name="Brooks K."/>
            <person name="Brown D."/>
            <person name="Brown S."/>
            <person name="Chillingworth T."/>
            <person name="Churcher C.M."/>
            <person name="Collins M."/>
            <person name="Connor R."/>
            <person name="Cronin A."/>
            <person name="Davis P."/>
            <person name="Feltwell T."/>
            <person name="Fraser A."/>
            <person name="Gentles S."/>
            <person name="Goble A."/>
            <person name="Hamlin N."/>
            <person name="Harris D.E."/>
            <person name="Hidalgo J."/>
            <person name="Hodgson G."/>
            <person name="Holroyd S."/>
            <person name="Hornsby T."/>
            <person name="Howarth S."/>
            <person name="Huckle E.J."/>
            <person name="Hunt S."/>
            <person name="Jagels K."/>
            <person name="James K.D."/>
            <person name="Jones L."/>
            <person name="Jones M."/>
            <person name="Leather S."/>
            <person name="McDonald S."/>
            <person name="McLean J."/>
            <person name="Mooney P."/>
            <person name="Moule S."/>
            <person name="Mungall K.L."/>
            <person name="Murphy L.D."/>
            <person name="Niblett D."/>
            <person name="Odell C."/>
            <person name="Oliver K."/>
            <person name="O'Neil S."/>
            <person name="Pearson D."/>
            <person name="Quail M.A."/>
            <person name="Rabbinowitsch E."/>
            <person name="Rutherford K.M."/>
            <person name="Rutter S."/>
            <person name="Saunders D."/>
            <person name="Seeger K."/>
            <person name="Sharp S."/>
            <person name="Skelton J."/>
            <person name="Simmonds M.N."/>
            <person name="Squares R."/>
            <person name="Squares S."/>
            <person name="Stevens K."/>
            <person name="Taylor K."/>
            <person name="Taylor R.G."/>
            <person name="Tivey A."/>
            <person name="Walsh S.V."/>
            <person name="Warren T."/>
            <person name="Whitehead S."/>
            <person name="Woodward J.R."/>
            <person name="Volckaert G."/>
            <person name="Aert R."/>
            <person name="Robben J."/>
            <person name="Grymonprez B."/>
            <person name="Weltjens I."/>
            <person name="Vanstreels E."/>
            <person name="Rieger M."/>
            <person name="Schaefer M."/>
            <person name="Mueller-Auer S."/>
            <person name="Gabel C."/>
            <person name="Fuchs M."/>
            <person name="Duesterhoeft A."/>
            <person name="Fritzc C."/>
            <person name="Holzer E."/>
            <person name="Moestl D."/>
            <person name="Hilbert H."/>
            <person name="Borzym K."/>
            <person name="Langer I."/>
            <person name="Beck A."/>
            <person name="Lehrach H."/>
            <person name="Reinhardt R."/>
            <person name="Pohl T.M."/>
            <person name="Eger P."/>
            <person name="Zimmermann W."/>
            <person name="Wedler H."/>
            <person name="Wambutt R."/>
            <person name="Purnelle B."/>
            <person name="Goffeau A."/>
            <person name="Cadieu E."/>
            <person name="Dreano S."/>
            <person name="Gloux S."/>
            <person name="Lelaure V."/>
            <person name="Mottier S."/>
            <person name="Galibert F."/>
            <person name="Aves S.J."/>
            <person name="Xiang Z."/>
            <person name="Hunt C."/>
            <person name="Moore K."/>
            <person name="Hurst S.M."/>
            <person name="Lucas M."/>
            <person name="Rochet M."/>
            <person name="Gaillardin C."/>
            <person name="Tallada V.A."/>
            <person name="Garzon A."/>
            <person name="Thode G."/>
            <person name="Daga R.R."/>
            <person name="Cruzado L."/>
            <person name="Jimenez J."/>
            <person name="Sanchez M."/>
            <person name="del Rey F."/>
            <person name="Benito J."/>
            <person name="Dominguez A."/>
            <person name="Revuelta J.L."/>
            <person name="Moreno S."/>
            <person name="Armstrong J."/>
            <person name="Forsburg S.L."/>
            <person name="Cerutti L."/>
            <person name="Lowe T."/>
            <person name="McCombie W.R."/>
            <person name="Paulsen I."/>
            <person name="Potashkin J."/>
            <person name="Shpakovski G.V."/>
            <person name="Ussery D."/>
            <person name="Barrell B.G."/>
            <person name="Nurse P."/>
        </authorList>
    </citation>
    <scope>NUCLEOTIDE SEQUENCE [LARGE SCALE GENOMIC DNA]</scope>
    <source>
        <strain>972 / ATCC 24843</strain>
    </source>
</reference>
<reference key="2">
    <citation type="journal article" date="2002" name="J. Biol. Chem.">
        <title>Ctr6, a vacuolar membrane copper transporter in Schizosaccharomyces pombe.</title>
        <authorList>
            <person name="Bellemare D.R."/>
            <person name="Shaner L."/>
            <person name="Morano K.A."/>
            <person name="Beaudoin J."/>
            <person name="Langlois R."/>
            <person name="Labbe S."/>
        </authorList>
    </citation>
    <scope>FUNCTION</scope>
    <scope>SUBUNIT</scope>
    <scope>SUBCELLULAR LOCATION</scope>
    <scope>INDUCTION</scope>
</reference>
<dbReference type="EMBL" id="CU329671">
    <property type="protein sequence ID" value="CAB58134.1"/>
    <property type="molecule type" value="Genomic_DNA"/>
</dbReference>
<dbReference type="PIR" id="T39949">
    <property type="entry name" value="T39949"/>
</dbReference>
<dbReference type="RefSeq" id="NP_595861.1">
    <property type="nucleotide sequence ID" value="NM_001021766.2"/>
</dbReference>
<dbReference type="SMR" id="Q9USV7"/>
<dbReference type="BioGRID" id="277166">
    <property type="interactions" value="5"/>
</dbReference>
<dbReference type="FunCoup" id="Q9USV7">
    <property type="interactions" value="167"/>
</dbReference>
<dbReference type="STRING" id="284812.Q9USV7"/>
<dbReference type="TCDB" id="1.A.56.1.6">
    <property type="family name" value="the copper transporter (ctr) family"/>
</dbReference>
<dbReference type="iPTMnet" id="Q9USV7"/>
<dbReference type="PaxDb" id="4896-SPBC23G7.16.1"/>
<dbReference type="EnsemblFungi" id="SPBC23G7.16.1">
    <property type="protein sequence ID" value="SPBC23G7.16.1:pep"/>
    <property type="gene ID" value="SPBC23G7.16"/>
</dbReference>
<dbReference type="GeneID" id="2540641"/>
<dbReference type="KEGG" id="spo:2540641"/>
<dbReference type="PomBase" id="SPBC23G7.16">
    <property type="gene designation" value="ctr6"/>
</dbReference>
<dbReference type="VEuPathDB" id="FungiDB:SPBC23G7.16"/>
<dbReference type="eggNOG" id="KOG3386">
    <property type="taxonomic scope" value="Eukaryota"/>
</dbReference>
<dbReference type="HOGENOM" id="CLU_079690_4_0_1"/>
<dbReference type="InParanoid" id="Q9USV7"/>
<dbReference type="OMA" id="DITEYCH"/>
<dbReference type="PhylomeDB" id="Q9USV7"/>
<dbReference type="Reactome" id="R-SPO-425410">
    <property type="pathway name" value="Metal ion SLC transporters"/>
</dbReference>
<dbReference type="PRO" id="PR:Q9USV7"/>
<dbReference type="Proteomes" id="UP000002485">
    <property type="component" value="Chromosome II"/>
</dbReference>
<dbReference type="GO" id="GO:0000329">
    <property type="term" value="C:fungal-type vacuole membrane"/>
    <property type="evidence" value="ECO:0000314"/>
    <property type="project" value="PomBase"/>
</dbReference>
<dbReference type="GO" id="GO:0005886">
    <property type="term" value="C:plasma membrane"/>
    <property type="evidence" value="ECO:0000314"/>
    <property type="project" value="PomBase"/>
</dbReference>
<dbReference type="GO" id="GO:0005628">
    <property type="term" value="C:prospore membrane"/>
    <property type="evidence" value="ECO:0000314"/>
    <property type="project" value="PomBase"/>
</dbReference>
<dbReference type="GO" id="GO:0005375">
    <property type="term" value="F:copper ion transmembrane transporter activity"/>
    <property type="evidence" value="ECO:0000315"/>
    <property type="project" value="PomBase"/>
</dbReference>
<dbReference type="GO" id="GO:0140145">
    <property type="term" value="P:copper ion export from vacuole"/>
    <property type="evidence" value="ECO:0000269"/>
    <property type="project" value="PomBase"/>
</dbReference>
<dbReference type="InterPro" id="IPR007274">
    <property type="entry name" value="Cop_transporter"/>
</dbReference>
<dbReference type="PANTHER" id="PTHR12483:SF115">
    <property type="entry name" value="COPPER TRANSPORT PROTEIN"/>
    <property type="match status" value="1"/>
</dbReference>
<dbReference type="PANTHER" id="PTHR12483">
    <property type="entry name" value="SOLUTE CARRIER FAMILY 31 COPPER TRANSPORTERS"/>
    <property type="match status" value="1"/>
</dbReference>
<dbReference type="Pfam" id="PF04145">
    <property type="entry name" value="Ctr"/>
    <property type="match status" value="1"/>
</dbReference>
<name>CTR6_SCHPO</name>
<comment type="function">
    <text evidence="2">Mobilizes stored copper from the vacuole to the cytoplasm under conditions of copper limitation.</text>
</comment>
<comment type="subunit">
    <text evidence="2">Homotrimer.</text>
</comment>
<comment type="subcellular location">
    <subcellularLocation>
        <location evidence="2">Vacuole membrane</location>
        <topology evidence="2">Multi-pass membrane protein</topology>
    </subcellularLocation>
</comment>
<comment type="induction">
    <text evidence="2">By copper deprivation.</text>
</comment>
<comment type="similarity">
    <text evidence="3">Belongs to the copper transporter (Ctr) (TC 1.A.56) family. SLC31A subfamily.</text>
</comment>
<proteinExistence type="evidence at protein level"/>
<feature type="chain" id="PRO_0000195050" description="Copper transport protein ctr6">
    <location>
        <begin position="1"/>
        <end position="148"/>
    </location>
</feature>
<feature type="topological domain" description="Extracellular" evidence="1">
    <location>
        <begin position="1"/>
        <end position="33"/>
    </location>
</feature>
<feature type="transmembrane region" description="Helical" evidence="1">
    <location>
        <begin position="34"/>
        <end position="54"/>
    </location>
</feature>
<feature type="topological domain" description="Cytoplasmic" evidence="1">
    <location>
        <begin position="55"/>
        <end position="108"/>
    </location>
</feature>
<feature type="transmembrane region" description="Helical" evidence="1">
    <location>
        <begin position="109"/>
        <end position="129"/>
    </location>
</feature>
<feature type="topological domain" description="Extracellular" evidence="1">
    <location>
        <begin position="130"/>
        <end position="148"/>
    </location>
</feature>
<organism>
    <name type="scientific">Schizosaccharomyces pombe (strain 972 / ATCC 24843)</name>
    <name type="common">Fission yeast</name>
    <dbReference type="NCBI Taxonomy" id="284812"/>
    <lineage>
        <taxon>Eukaryota</taxon>
        <taxon>Fungi</taxon>
        <taxon>Dikarya</taxon>
        <taxon>Ascomycota</taxon>
        <taxon>Taphrinomycotina</taxon>
        <taxon>Schizosaccharomycetes</taxon>
        <taxon>Schizosaccharomycetales</taxon>
        <taxon>Schizosaccharomycetaceae</taxon>
        <taxon>Schizosaccharomyces</taxon>
    </lineage>
</organism>
<accession>Q9USV7</accession>
<protein>
    <recommendedName>
        <fullName>Copper transport protein ctr6</fullName>
        <shortName>Copper transporter 6</shortName>
    </recommendedName>
</protein>